<proteinExistence type="inferred from homology"/>
<accession>Q5WEG7</accession>
<name>FPG_SHOC1</name>
<gene>
    <name evidence="2" type="primary">mutM</name>
    <name evidence="2" type="synonym">fpg</name>
    <name type="ordered locus">ABC2708</name>
</gene>
<keyword id="KW-0227">DNA damage</keyword>
<keyword id="KW-0234">DNA repair</keyword>
<keyword id="KW-0238">DNA-binding</keyword>
<keyword id="KW-0326">Glycosidase</keyword>
<keyword id="KW-0378">Hydrolase</keyword>
<keyword id="KW-0456">Lyase</keyword>
<keyword id="KW-0479">Metal-binding</keyword>
<keyword id="KW-0511">Multifunctional enzyme</keyword>
<keyword id="KW-1185">Reference proteome</keyword>
<keyword id="KW-0862">Zinc</keyword>
<keyword id="KW-0863">Zinc-finger</keyword>
<dbReference type="EC" id="3.2.2.23" evidence="2"/>
<dbReference type="EC" id="4.2.99.18" evidence="2"/>
<dbReference type="EMBL" id="AP006627">
    <property type="protein sequence ID" value="BAD65243.1"/>
    <property type="molecule type" value="Genomic_DNA"/>
</dbReference>
<dbReference type="RefSeq" id="WP_011247551.1">
    <property type="nucleotide sequence ID" value="NC_006582.1"/>
</dbReference>
<dbReference type="SMR" id="Q5WEG7"/>
<dbReference type="STRING" id="66692.ABC2708"/>
<dbReference type="KEGG" id="bcl:ABC2708"/>
<dbReference type="eggNOG" id="COG0266">
    <property type="taxonomic scope" value="Bacteria"/>
</dbReference>
<dbReference type="HOGENOM" id="CLU_038423_1_2_9"/>
<dbReference type="OrthoDB" id="9800855at2"/>
<dbReference type="Proteomes" id="UP000001168">
    <property type="component" value="Chromosome"/>
</dbReference>
<dbReference type="GO" id="GO:0034039">
    <property type="term" value="F:8-oxo-7,8-dihydroguanine DNA N-glycosylase activity"/>
    <property type="evidence" value="ECO:0007669"/>
    <property type="project" value="TreeGrafter"/>
</dbReference>
<dbReference type="GO" id="GO:0140078">
    <property type="term" value="F:class I DNA-(apurinic or apyrimidinic site) endonuclease activity"/>
    <property type="evidence" value="ECO:0007669"/>
    <property type="project" value="UniProtKB-EC"/>
</dbReference>
<dbReference type="GO" id="GO:0003684">
    <property type="term" value="F:damaged DNA binding"/>
    <property type="evidence" value="ECO:0007669"/>
    <property type="project" value="InterPro"/>
</dbReference>
<dbReference type="GO" id="GO:0008270">
    <property type="term" value="F:zinc ion binding"/>
    <property type="evidence" value="ECO:0007669"/>
    <property type="project" value="UniProtKB-UniRule"/>
</dbReference>
<dbReference type="GO" id="GO:0006284">
    <property type="term" value="P:base-excision repair"/>
    <property type="evidence" value="ECO:0007669"/>
    <property type="project" value="InterPro"/>
</dbReference>
<dbReference type="CDD" id="cd08966">
    <property type="entry name" value="EcFpg-like_N"/>
    <property type="match status" value="1"/>
</dbReference>
<dbReference type="FunFam" id="1.10.8.50:FF:000003">
    <property type="entry name" value="Formamidopyrimidine-DNA glycosylase"/>
    <property type="match status" value="1"/>
</dbReference>
<dbReference type="FunFam" id="3.20.190.10:FF:000001">
    <property type="entry name" value="Formamidopyrimidine-DNA glycosylase"/>
    <property type="match status" value="1"/>
</dbReference>
<dbReference type="Gene3D" id="1.10.8.50">
    <property type="match status" value="1"/>
</dbReference>
<dbReference type="Gene3D" id="3.20.190.10">
    <property type="entry name" value="MutM-like, N-terminal"/>
    <property type="match status" value="1"/>
</dbReference>
<dbReference type="HAMAP" id="MF_00103">
    <property type="entry name" value="Fapy_DNA_glycosyl"/>
    <property type="match status" value="1"/>
</dbReference>
<dbReference type="InterPro" id="IPR015886">
    <property type="entry name" value="DNA_glyclase/AP_lyase_DNA-bd"/>
</dbReference>
<dbReference type="InterPro" id="IPR020629">
    <property type="entry name" value="Formamido-pyr_DNA_Glyclase"/>
</dbReference>
<dbReference type="InterPro" id="IPR012319">
    <property type="entry name" value="FPG_cat"/>
</dbReference>
<dbReference type="InterPro" id="IPR035937">
    <property type="entry name" value="MutM-like_N-ter"/>
</dbReference>
<dbReference type="InterPro" id="IPR010979">
    <property type="entry name" value="Ribosomal_uS13-like_H2TH"/>
</dbReference>
<dbReference type="InterPro" id="IPR000214">
    <property type="entry name" value="Znf_DNA_glyclase/AP_lyase"/>
</dbReference>
<dbReference type="InterPro" id="IPR010663">
    <property type="entry name" value="Znf_FPG/IleRS"/>
</dbReference>
<dbReference type="NCBIfam" id="TIGR00577">
    <property type="entry name" value="fpg"/>
    <property type="match status" value="1"/>
</dbReference>
<dbReference type="NCBIfam" id="NF002211">
    <property type="entry name" value="PRK01103.1"/>
    <property type="match status" value="1"/>
</dbReference>
<dbReference type="PANTHER" id="PTHR22993">
    <property type="entry name" value="FORMAMIDOPYRIMIDINE-DNA GLYCOSYLASE"/>
    <property type="match status" value="1"/>
</dbReference>
<dbReference type="PANTHER" id="PTHR22993:SF9">
    <property type="entry name" value="FORMAMIDOPYRIMIDINE-DNA GLYCOSYLASE"/>
    <property type="match status" value="1"/>
</dbReference>
<dbReference type="Pfam" id="PF01149">
    <property type="entry name" value="Fapy_DNA_glyco"/>
    <property type="match status" value="1"/>
</dbReference>
<dbReference type="Pfam" id="PF06831">
    <property type="entry name" value="H2TH"/>
    <property type="match status" value="1"/>
</dbReference>
<dbReference type="Pfam" id="PF06827">
    <property type="entry name" value="zf-FPG_IleRS"/>
    <property type="match status" value="1"/>
</dbReference>
<dbReference type="SMART" id="SM00898">
    <property type="entry name" value="Fapy_DNA_glyco"/>
    <property type="match status" value="1"/>
</dbReference>
<dbReference type="SMART" id="SM01232">
    <property type="entry name" value="H2TH"/>
    <property type="match status" value="1"/>
</dbReference>
<dbReference type="SUPFAM" id="SSF57716">
    <property type="entry name" value="Glucocorticoid receptor-like (DNA-binding domain)"/>
    <property type="match status" value="1"/>
</dbReference>
<dbReference type="SUPFAM" id="SSF81624">
    <property type="entry name" value="N-terminal domain of MutM-like DNA repair proteins"/>
    <property type="match status" value="1"/>
</dbReference>
<dbReference type="SUPFAM" id="SSF46946">
    <property type="entry name" value="S13-like H2TH domain"/>
    <property type="match status" value="1"/>
</dbReference>
<dbReference type="PROSITE" id="PS51068">
    <property type="entry name" value="FPG_CAT"/>
    <property type="match status" value="1"/>
</dbReference>
<dbReference type="PROSITE" id="PS51066">
    <property type="entry name" value="ZF_FPG_2"/>
    <property type="match status" value="1"/>
</dbReference>
<reference key="1">
    <citation type="submission" date="2003-10" db="EMBL/GenBank/DDBJ databases">
        <title>The complete genome sequence of the alkaliphilic Bacillus clausii KSM-K16.</title>
        <authorList>
            <person name="Takaki Y."/>
            <person name="Kageyama Y."/>
            <person name="Shimamura S."/>
            <person name="Suzuki H."/>
            <person name="Nishi S."/>
            <person name="Hatada Y."/>
            <person name="Kawai S."/>
            <person name="Ito S."/>
            <person name="Horikoshi K."/>
        </authorList>
    </citation>
    <scope>NUCLEOTIDE SEQUENCE [LARGE SCALE GENOMIC DNA]</scope>
    <source>
        <strain>KSM-K16</strain>
    </source>
</reference>
<evidence type="ECO:0000250" key="1"/>
<evidence type="ECO:0000255" key="2">
    <source>
        <dbReference type="HAMAP-Rule" id="MF_00103"/>
    </source>
</evidence>
<organism>
    <name type="scientific">Shouchella clausii (strain KSM-K16)</name>
    <name type="common">Alkalihalobacillus clausii</name>
    <dbReference type="NCBI Taxonomy" id="66692"/>
    <lineage>
        <taxon>Bacteria</taxon>
        <taxon>Bacillati</taxon>
        <taxon>Bacillota</taxon>
        <taxon>Bacilli</taxon>
        <taxon>Bacillales</taxon>
        <taxon>Bacillaceae</taxon>
        <taxon>Shouchella</taxon>
    </lineage>
</organism>
<comment type="function">
    <text evidence="2">Involved in base excision repair of DNA damaged by oxidation or by mutagenic agents. Acts as a DNA glycosylase that recognizes and removes damaged bases. Has a preference for oxidized purines, such as 7,8-dihydro-8-oxoguanine (8-oxoG). Has AP (apurinic/apyrimidinic) lyase activity and introduces nicks in the DNA strand. Cleaves the DNA backbone by beta-delta elimination to generate a single-strand break at the site of the removed base with both 3'- and 5'-phosphates.</text>
</comment>
<comment type="catalytic activity">
    <reaction evidence="2">
        <text>Hydrolysis of DNA containing ring-opened 7-methylguanine residues, releasing 2,6-diamino-4-hydroxy-5-(N-methyl)formamidopyrimidine.</text>
        <dbReference type="EC" id="3.2.2.23"/>
    </reaction>
</comment>
<comment type="catalytic activity">
    <reaction evidence="2">
        <text>2'-deoxyribonucleotide-(2'-deoxyribose 5'-phosphate)-2'-deoxyribonucleotide-DNA = a 3'-end 2'-deoxyribonucleotide-(2,3-dehydro-2,3-deoxyribose 5'-phosphate)-DNA + a 5'-end 5'-phospho-2'-deoxyribonucleoside-DNA + H(+)</text>
        <dbReference type="Rhea" id="RHEA:66592"/>
        <dbReference type="Rhea" id="RHEA-COMP:13180"/>
        <dbReference type="Rhea" id="RHEA-COMP:16897"/>
        <dbReference type="Rhea" id="RHEA-COMP:17067"/>
        <dbReference type="ChEBI" id="CHEBI:15378"/>
        <dbReference type="ChEBI" id="CHEBI:136412"/>
        <dbReference type="ChEBI" id="CHEBI:157695"/>
        <dbReference type="ChEBI" id="CHEBI:167181"/>
        <dbReference type="EC" id="4.2.99.18"/>
    </reaction>
</comment>
<comment type="cofactor">
    <cofactor evidence="2">
        <name>Zn(2+)</name>
        <dbReference type="ChEBI" id="CHEBI:29105"/>
    </cofactor>
    <text evidence="2">Binds 1 zinc ion per subunit.</text>
</comment>
<comment type="subunit">
    <text evidence="2">Monomer.</text>
</comment>
<comment type="similarity">
    <text evidence="2">Belongs to the FPG family.</text>
</comment>
<sequence length="276" mass="31245">MPELPEVETVRRTLLQLVKNKTIADVDVGWPKMIKEPDDVERFIQLLKGQTIEDIGRRGKFLLFVLNDYVLVSHLRMEGRYGLYQPTDEKTKHTHVVFSFTDGSELRYADVRKFGTMHLFAKGAEHVAMPLAQLGVEPFSEQFTVELLEQAYAKTTRAIKTALLDQKTVVGLGNIYVDEALFHAGIHPERTASSLSKEEYHNLHKEIKRTLKEAIEAGGSSIKSYVNGQGEIGMFQQQLHVYGRKQQPCHHCDTAIEKTVVGGRGTHYCPNCQPRP</sequence>
<feature type="initiator methionine" description="Removed" evidence="1">
    <location>
        <position position="1"/>
    </location>
</feature>
<feature type="chain" id="PRO_0000228413" description="Formamidopyrimidine-DNA glycosylase">
    <location>
        <begin position="2"/>
        <end position="276"/>
    </location>
</feature>
<feature type="zinc finger region" description="FPG-type" evidence="2">
    <location>
        <begin position="240"/>
        <end position="274"/>
    </location>
</feature>
<feature type="active site" description="Schiff-base intermediate with DNA" evidence="2">
    <location>
        <position position="2"/>
    </location>
</feature>
<feature type="active site" description="Proton donor" evidence="2">
    <location>
        <position position="3"/>
    </location>
</feature>
<feature type="active site" description="Proton donor; for beta-elimination activity" evidence="2">
    <location>
        <position position="60"/>
    </location>
</feature>
<feature type="active site" description="Proton donor; for delta-elimination activity" evidence="2">
    <location>
        <position position="264"/>
    </location>
</feature>
<feature type="binding site" evidence="2">
    <location>
        <position position="93"/>
    </location>
    <ligand>
        <name>DNA</name>
        <dbReference type="ChEBI" id="CHEBI:16991"/>
    </ligand>
</feature>
<feature type="binding site" evidence="2">
    <location>
        <position position="112"/>
    </location>
    <ligand>
        <name>DNA</name>
        <dbReference type="ChEBI" id="CHEBI:16991"/>
    </ligand>
</feature>
<protein>
    <recommendedName>
        <fullName evidence="2">Formamidopyrimidine-DNA glycosylase</fullName>
        <shortName evidence="2">Fapy-DNA glycosylase</shortName>
        <ecNumber evidence="2">3.2.2.23</ecNumber>
    </recommendedName>
    <alternativeName>
        <fullName evidence="2">DNA-(apurinic or apyrimidinic site) lyase MutM</fullName>
        <shortName evidence="2">AP lyase MutM</shortName>
        <ecNumber evidence="2">4.2.99.18</ecNumber>
    </alternativeName>
</protein>